<evidence type="ECO:0000250" key="1"/>
<evidence type="ECO:0000250" key="2">
    <source>
        <dbReference type="UniProtKB" id="P16067"/>
    </source>
</evidence>
<evidence type="ECO:0000250" key="3">
    <source>
        <dbReference type="UniProtKB" id="P20594"/>
    </source>
</evidence>
<evidence type="ECO:0000255" key="4"/>
<evidence type="ECO:0000255" key="5">
    <source>
        <dbReference type="PROSITE-ProRule" id="PRU00099"/>
    </source>
</evidence>
<evidence type="ECO:0000255" key="6">
    <source>
        <dbReference type="PROSITE-ProRule" id="PRU00159"/>
    </source>
</evidence>
<evidence type="ECO:0000305" key="7"/>
<reference key="1">
    <citation type="journal article" date="1994" name="Eur. J. Biochem.">
        <title>Cloning and expression of eel natriuretic-peptide receptor B and comparison with its mammalian counterparts.</title>
        <authorList>
            <person name="Katafuchi T."/>
            <person name="Takashima A."/>
            <person name="Kashiwagi M."/>
            <person name="Hagiwara H."/>
            <person name="Takei Y."/>
            <person name="Hirose S."/>
        </authorList>
    </citation>
    <scope>NUCLEOTIDE SEQUENCE [MRNA]</scope>
    <source>
        <tissue>Gill</tissue>
    </source>
</reference>
<proteinExistence type="evidence at transcript level"/>
<keyword id="KW-1003">Cell membrane</keyword>
<keyword id="KW-0141">cGMP biosynthesis</keyword>
<keyword id="KW-1015">Disulfide bond</keyword>
<keyword id="KW-0325">Glycoprotein</keyword>
<keyword id="KW-0342">GTP-binding</keyword>
<keyword id="KW-0456">Lyase</keyword>
<keyword id="KW-0472">Membrane</keyword>
<keyword id="KW-0547">Nucleotide-binding</keyword>
<keyword id="KW-0892">Osteogenesis</keyword>
<keyword id="KW-0597">Phosphoprotein</keyword>
<keyword id="KW-0675">Receptor</keyword>
<keyword id="KW-0732">Signal</keyword>
<keyword id="KW-0346">Stress response</keyword>
<keyword id="KW-0812">Transmembrane</keyword>
<keyword id="KW-1133">Transmembrane helix</keyword>
<comment type="function">
    <text evidence="3">Receptor for the C-type natriuretic peptide NPPC/CNP hormone. Has guanylate cyclase activity upon binding of its ligand. May play a role in the regulation of skeletal growth.</text>
</comment>
<comment type="catalytic activity">
    <reaction evidence="3">
        <text>GTP = 3',5'-cyclic GMP + diphosphate</text>
        <dbReference type="Rhea" id="RHEA:13665"/>
        <dbReference type="ChEBI" id="CHEBI:33019"/>
        <dbReference type="ChEBI" id="CHEBI:37565"/>
        <dbReference type="ChEBI" id="CHEBI:57746"/>
        <dbReference type="EC" id="4.6.1.2"/>
    </reaction>
</comment>
<comment type="subcellular location">
    <subcellularLocation>
        <location evidence="3">Cell membrane</location>
        <topology evidence="3">Single-pass type I membrane protein</topology>
    </subcellularLocation>
</comment>
<comment type="tissue specificity">
    <text>High levels found in liver, atrium and gill. Moderate levels found in brain and ventricle, and low levels in esophageal sphincter, stomach, posterior intestine and kidney.</text>
</comment>
<comment type="induction">
    <text>By osmotic stress; levels decrease under saline conditions.</text>
</comment>
<comment type="PTM">
    <text evidence="2">Phosphorylated. Phosphorylation of the protein kinase-like domain is required for full activation by CNP.</text>
</comment>
<comment type="PTM">
    <text evidence="3">Glycosylated.</text>
</comment>
<comment type="similarity">
    <text evidence="5">Belongs to the adenylyl cyclase class-4/guanylyl cyclase family.</text>
</comment>
<gene>
    <name type="primary">npr2</name>
</gene>
<accession>P55202</accession>
<dbReference type="EC" id="4.6.1.2" evidence="3"/>
<dbReference type="EMBL" id="D25417">
    <property type="protein sequence ID" value="BAA05007.1"/>
    <property type="molecule type" value="mRNA"/>
</dbReference>
<dbReference type="PIR" id="S45636">
    <property type="entry name" value="S45636"/>
</dbReference>
<dbReference type="SMR" id="P55202"/>
<dbReference type="GlyCosmos" id="P55202">
    <property type="glycosylation" value="8 sites, No reported glycans"/>
</dbReference>
<dbReference type="GO" id="GO:0005886">
    <property type="term" value="C:plasma membrane"/>
    <property type="evidence" value="ECO:0000250"/>
    <property type="project" value="UniProtKB"/>
</dbReference>
<dbReference type="GO" id="GO:0004016">
    <property type="term" value="F:adenylate cyclase activity"/>
    <property type="evidence" value="ECO:0007669"/>
    <property type="project" value="TreeGrafter"/>
</dbReference>
<dbReference type="GO" id="GO:0005524">
    <property type="term" value="F:ATP binding"/>
    <property type="evidence" value="ECO:0007669"/>
    <property type="project" value="InterPro"/>
</dbReference>
<dbReference type="GO" id="GO:0005525">
    <property type="term" value="F:GTP binding"/>
    <property type="evidence" value="ECO:0007669"/>
    <property type="project" value="UniProtKB-KW"/>
</dbReference>
<dbReference type="GO" id="GO:0004383">
    <property type="term" value="F:guanylate cyclase activity"/>
    <property type="evidence" value="ECO:0000250"/>
    <property type="project" value="UniProtKB"/>
</dbReference>
<dbReference type="GO" id="GO:0016941">
    <property type="term" value="F:natriuretic peptide receptor activity"/>
    <property type="evidence" value="ECO:0000250"/>
    <property type="project" value="UniProtKB"/>
</dbReference>
<dbReference type="GO" id="GO:0017046">
    <property type="term" value="F:peptide hormone binding"/>
    <property type="evidence" value="ECO:0007669"/>
    <property type="project" value="TreeGrafter"/>
</dbReference>
<dbReference type="GO" id="GO:0004672">
    <property type="term" value="F:protein kinase activity"/>
    <property type="evidence" value="ECO:0007669"/>
    <property type="project" value="InterPro"/>
</dbReference>
<dbReference type="GO" id="GO:0035556">
    <property type="term" value="P:intracellular signal transduction"/>
    <property type="evidence" value="ECO:0007669"/>
    <property type="project" value="InterPro"/>
</dbReference>
<dbReference type="GO" id="GO:0001503">
    <property type="term" value="P:ossification"/>
    <property type="evidence" value="ECO:0007669"/>
    <property type="project" value="UniProtKB-KW"/>
</dbReference>
<dbReference type="GO" id="GO:0007168">
    <property type="term" value="P:receptor guanylyl cyclase signaling pathway"/>
    <property type="evidence" value="ECO:0000250"/>
    <property type="project" value="UniProtKB"/>
</dbReference>
<dbReference type="CDD" id="cd07302">
    <property type="entry name" value="CHD"/>
    <property type="match status" value="1"/>
</dbReference>
<dbReference type="CDD" id="cd14042">
    <property type="entry name" value="PK_GC-A_B"/>
    <property type="match status" value="1"/>
</dbReference>
<dbReference type="FunFam" id="1.10.510.10:FF:000270">
    <property type="entry name" value="Guanylate cyclase"/>
    <property type="match status" value="1"/>
</dbReference>
<dbReference type="FunFam" id="3.30.200.20:FF:001106">
    <property type="entry name" value="Guanylate cyclase"/>
    <property type="match status" value="1"/>
</dbReference>
<dbReference type="FunFam" id="3.30.70.1230:FF:000004">
    <property type="entry name" value="Guanylate cyclase"/>
    <property type="match status" value="1"/>
</dbReference>
<dbReference type="FunFam" id="3.40.50.2300:FF:000101">
    <property type="entry name" value="Guanylate cyclase"/>
    <property type="match status" value="1"/>
</dbReference>
<dbReference type="FunFam" id="3.40.50.2300:FF:000327">
    <property type="entry name" value="Guanylate cyclase"/>
    <property type="match status" value="1"/>
</dbReference>
<dbReference type="Gene3D" id="3.40.50.2300">
    <property type="match status" value="2"/>
</dbReference>
<dbReference type="Gene3D" id="6.10.250.780">
    <property type="match status" value="1"/>
</dbReference>
<dbReference type="Gene3D" id="3.30.70.1230">
    <property type="entry name" value="Nucleotide cyclase"/>
    <property type="match status" value="1"/>
</dbReference>
<dbReference type="Gene3D" id="1.10.510.10">
    <property type="entry name" value="Transferase(Phosphotransferase) domain 1"/>
    <property type="match status" value="1"/>
</dbReference>
<dbReference type="InterPro" id="IPR001054">
    <property type="entry name" value="A/G_cyclase"/>
</dbReference>
<dbReference type="InterPro" id="IPR018297">
    <property type="entry name" value="A/G_cyclase_CS"/>
</dbReference>
<dbReference type="InterPro" id="IPR001828">
    <property type="entry name" value="ANF_lig-bd_rcpt"/>
</dbReference>
<dbReference type="InterPro" id="IPR001170">
    <property type="entry name" value="ANPR/GUC"/>
</dbReference>
<dbReference type="InterPro" id="IPR050401">
    <property type="entry name" value="Cyclic_nucleotide_synthase"/>
</dbReference>
<dbReference type="InterPro" id="IPR011009">
    <property type="entry name" value="Kinase-like_dom_sf"/>
</dbReference>
<dbReference type="InterPro" id="IPR029787">
    <property type="entry name" value="Nucleotide_cyclase"/>
</dbReference>
<dbReference type="InterPro" id="IPR028082">
    <property type="entry name" value="Peripla_BP_I"/>
</dbReference>
<dbReference type="InterPro" id="IPR000719">
    <property type="entry name" value="Prot_kinase_dom"/>
</dbReference>
<dbReference type="InterPro" id="IPR001245">
    <property type="entry name" value="Ser-Thr/Tyr_kinase_cat_dom"/>
</dbReference>
<dbReference type="PANTHER" id="PTHR11920:SF505">
    <property type="entry name" value="GUANYLATE CYCLASE"/>
    <property type="match status" value="1"/>
</dbReference>
<dbReference type="PANTHER" id="PTHR11920">
    <property type="entry name" value="GUANYLYL CYCLASE"/>
    <property type="match status" value="1"/>
</dbReference>
<dbReference type="Pfam" id="PF01094">
    <property type="entry name" value="ANF_receptor"/>
    <property type="match status" value="1"/>
</dbReference>
<dbReference type="Pfam" id="PF00211">
    <property type="entry name" value="Guanylate_cyc"/>
    <property type="match status" value="1"/>
</dbReference>
<dbReference type="Pfam" id="PF07714">
    <property type="entry name" value="PK_Tyr_Ser-Thr"/>
    <property type="match status" value="1"/>
</dbReference>
<dbReference type="PRINTS" id="PR00255">
    <property type="entry name" value="NATPEPTIDER"/>
</dbReference>
<dbReference type="SMART" id="SM00044">
    <property type="entry name" value="CYCc"/>
    <property type="match status" value="1"/>
</dbReference>
<dbReference type="SUPFAM" id="SSF55073">
    <property type="entry name" value="Nucleotide cyclase"/>
    <property type="match status" value="1"/>
</dbReference>
<dbReference type="SUPFAM" id="SSF53822">
    <property type="entry name" value="Periplasmic binding protein-like I"/>
    <property type="match status" value="1"/>
</dbReference>
<dbReference type="SUPFAM" id="SSF56112">
    <property type="entry name" value="Protein kinase-like (PK-like)"/>
    <property type="match status" value="1"/>
</dbReference>
<dbReference type="PROSITE" id="PS00452">
    <property type="entry name" value="GUANYLATE_CYCLASE_1"/>
    <property type="match status" value="1"/>
</dbReference>
<dbReference type="PROSITE" id="PS50125">
    <property type="entry name" value="GUANYLATE_CYCLASE_2"/>
    <property type="match status" value="1"/>
</dbReference>
<dbReference type="PROSITE" id="PS50011">
    <property type="entry name" value="PROTEIN_KINASE_DOM"/>
    <property type="match status" value="1"/>
</dbReference>
<protein>
    <recommendedName>
        <fullName>Atrial natriuretic peptide receptor 2</fullName>
        <ecNumber evidence="3">4.6.1.2</ecNumber>
    </recommendedName>
    <alternativeName>
        <fullName>Atrial natriuretic peptide receptor type B</fullName>
        <shortName>ANP-B</shortName>
        <shortName>ANPR-B</shortName>
        <shortName>NPR-B</shortName>
    </alternativeName>
    <alternativeName>
        <fullName>Guanylate cyclase B</fullName>
        <shortName>GC-B</shortName>
    </alternativeName>
</protein>
<feature type="signal peptide" evidence="4">
    <location>
        <begin position="1"/>
        <end position="19"/>
    </location>
</feature>
<feature type="chain" id="PRO_0000012367" description="Atrial natriuretic peptide receptor 2">
    <location>
        <begin position="20"/>
        <end position="1050"/>
    </location>
</feature>
<feature type="topological domain" description="Extracellular" evidence="4">
    <location>
        <begin position="20"/>
        <end position="460"/>
    </location>
</feature>
<feature type="transmembrane region" description="Helical" evidence="4">
    <location>
        <begin position="461"/>
        <end position="481"/>
    </location>
</feature>
<feature type="topological domain" description="Cytoplasmic" evidence="4">
    <location>
        <begin position="482"/>
        <end position="1050"/>
    </location>
</feature>
<feature type="domain" description="Protein kinase" evidence="6">
    <location>
        <begin position="517"/>
        <end position="790"/>
    </location>
</feature>
<feature type="domain" description="Guanylate cyclase" evidence="5">
    <location>
        <begin position="865"/>
        <end position="995"/>
    </location>
</feature>
<feature type="glycosylation site" description="N-linked (GlcNAc...) asparagine" evidence="4">
    <location>
        <position position="26"/>
    </location>
</feature>
<feature type="glycosylation site" description="N-linked (GlcNAc...) asparagine" evidence="4">
    <location>
        <position position="74"/>
    </location>
</feature>
<feature type="glycosylation site" description="N-linked (GlcNAc...) asparagine" evidence="4">
    <location>
        <position position="169"/>
    </location>
</feature>
<feature type="glycosylation site" description="N-linked (GlcNAc...) asparagine" evidence="4">
    <location>
        <position position="203"/>
    </location>
</feature>
<feature type="glycosylation site" description="N-linked (GlcNAc...) asparagine" evidence="4">
    <location>
        <position position="285"/>
    </location>
</feature>
<feature type="glycosylation site" description="N-linked (GlcNAc...) asparagine" evidence="4">
    <location>
        <position position="352"/>
    </location>
</feature>
<feature type="glycosylation site" description="N-linked (GlcNAc...) asparagine" evidence="4">
    <location>
        <position position="366"/>
    </location>
</feature>
<feature type="glycosylation site" description="N-linked (GlcNAc...) asparagine" evidence="4">
    <location>
        <position position="415"/>
    </location>
</feature>
<feature type="disulfide bond" evidence="1">
    <location>
        <begin position="84"/>
        <end position="110"/>
    </location>
</feature>
<feature type="disulfide bond" evidence="1">
    <location>
        <begin position="236"/>
        <end position="339"/>
    </location>
</feature>
<feature type="disulfide bond" description="Interchain" evidence="7">
    <location>
        <position position="443"/>
    </location>
</feature>
<feature type="disulfide bond" description="Interchain" evidence="7">
    <location>
        <position position="452"/>
    </location>
</feature>
<name>ANPRB_ANGJA</name>
<organism>
    <name type="scientific">Anguilla japonica</name>
    <name type="common">Japanese eel</name>
    <dbReference type="NCBI Taxonomy" id="7937"/>
    <lineage>
        <taxon>Eukaryota</taxon>
        <taxon>Metazoa</taxon>
        <taxon>Chordata</taxon>
        <taxon>Craniata</taxon>
        <taxon>Vertebrata</taxon>
        <taxon>Euteleostomi</taxon>
        <taxon>Actinopterygii</taxon>
        <taxon>Neopterygii</taxon>
        <taxon>Teleostei</taxon>
        <taxon>Anguilliformes</taxon>
        <taxon>Anguillidae</taxon>
        <taxon>Anguilla</taxon>
    </lineage>
</organism>
<sequence>MDLGHSLFVVFTCFLMARCRTEIGKNITVVVMLPDNHLKYSFAFPRVFPAIRMAHDDIQKKGKLLRGYTINLLNHSTESQGAGCSESQAQIMAVDTKLYEKPDAFFGPGCVYSVASVGRFVNHWKLPLITAWAPAFGFDSKEEYRTIVRTGLSTTKLGEFAHYLHSHFNWTTRAFMLFHDLKVDDRPYYFISEGVFLVLRRENITVEAVPYDDQKNSDYREMISSLKSNGRIVYICGPLDTFLEFMRIFQNEGLPPEDYAIFYLDMFAKSILDKDYKPWESSDINWTDPIKLFKSVFVITAKEPDNPEYKAFQRELHARAKQEFSVQLEPSLEDIIAGCFYDGFMLYAQALNETLAEGGSQNDGINITQKMQNRRFWGVTGLVSTDKNNDRDIDFNLWAMTNHKTGQYGIVAYYNGTNKEIVWSETEKIQWPKGSPPLDNPPCVFSMDEPFCNEDQLPVLGIVAVGSGLALIIFGISSFLIYRKLKLEKELAGMLWRIRWEELQFESPNKYHKCAGSRLTISQRGSSYGSLITAHGKYQLFAKTGYFKGNLVAIKHVNKKRIELTRQVLFELKHMRDVQFNHLTRFIGACIDPPNICIVTEYCPRGSLQDILENESINLDWMFRYSLINDIVKGMNFLHNSYIGSHGNLKSSNCVVDSRFVLKITDYGLASFRSSCENEDSHALYAKKLWTAPELLIYDRHPPQGTQKGDVYSFGIILQEIALRNGPFYVDGMDLSPKEIVQKVRNGQKPYFRPTTDTSCHSEELSILMEGCWAEDPADRPDFSYIKIFVMKLNKEGSTSILNNLLSRMEQYANNLENLVEERTQAYLEEKRKAENLLYQILPHSVAEQLKRGETVQAEAFDSVTIYFSDIVGFTSMSAESTPLQVVTLLNDLYTCFDAIIDNFDVYKVETIGDAYMVVSDSQSRNGKLHAREIAGMSLALLEQVKTFKIRHRPNDQLRLRIGIHTGPVCAGVVGLKMPRYCLFGDTVNTASRMESNGEALKIHLSSATKEVLDEFGYFDLQLRGDVEMKGKGKMRTYWLLGEKTDVYVI</sequence>